<gene>
    <name evidence="1" type="primary">queA</name>
    <name type="ordered locus">Caul_2190</name>
</gene>
<feature type="chain" id="PRO_1000075995" description="S-adenosylmethionine:tRNA ribosyltransferase-isomerase">
    <location>
        <begin position="1"/>
        <end position="373"/>
    </location>
</feature>
<protein>
    <recommendedName>
        <fullName evidence="1">S-adenosylmethionine:tRNA ribosyltransferase-isomerase</fullName>
        <ecNumber evidence="1">2.4.99.17</ecNumber>
    </recommendedName>
    <alternativeName>
        <fullName evidence="1">Queuosine biosynthesis protein QueA</fullName>
    </alternativeName>
</protein>
<sequence length="373" mass="40300">MRLSDFDFHLPDAAIALRPAEPRDSARLLVVRPGEGLEDRIVRDLPDFLRPGDALVFNDTRVIPARLMGRRAGRETGGGDGSPVAVEATLHRRIAPDRWVAFMRPGKRLKEGDRIAFGHDQDRACQAGMLDATVIAKHEGGEIELAFDFAGVDLDLAVAAHGEMPLPPYIAAKRAEDDRDRADYQTVYAREDGSVAAPTAGLHFTSDLLERLKAGGVSLHFVTLHVGAGTFLPVKTDVVADHKMHAEFGEVPAAVADALNAARAAGGRIVCVGTTSLRLLESATGEDRIIKPFADETAIFITPGYRFRAADVLMTNFHLPKSTLFMLVSAFAGQATMKAAYEHAIAAGYRFYSYGDGSLLFRAATDENGSEQS</sequence>
<evidence type="ECO:0000255" key="1">
    <source>
        <dbReference type="HAMAP-Rule" id="MF_00113"/>
    </source>
</evidence>
<accession>B0T8H5</accession>
<keyword id="KW-0963">Cytoplasm</keyword>
<keyword id="KW-0671">Queuosine biosynthesis</keyword>
<keyword id="KW-0949">S-adenosyl-L-methionine</keyword>
<keyword id="KW-0808">Transferase</keyword>
<organism>
    <name type="scientific">Caulobacter sp. (strain K31)</name>
    <dbReference type="NCBI Taxonomy" id="366602"/>
    <lineage>
        <taxon>Bacteria</taxon>
        <taxon>Pseudomonadati</taxon>
        <taxon>Pseudomonadota</taxon>
        <taxon>Alphaproteobacteria</taxon>
        <taxon>Caulobacterales</taxon>
        <taxon>Caulobacteraceae</taxon>
        <taxon>Caulobacter</taxon>
    </lineage>
</organism>
<proteinExistence type="inferred from homology"/>
<dbReference type="EC" id="2.4.99.17" evidence="1"/>
<dbReference type="EMBL" id="CP000927">
    <property type="protein sequence ID" value="ABZ71318.1"/>
    <property type="molecule type" value="Genomic_DNA"/>
</dbReference>
<dbReference type="SMR" id="B0T8H5"/>
<dbReference type="STRING" id="366602.Caul_2190"/>
<dbReference type="KEGG" id="cak:Caul_2190"/>
<dbReference type="eggNOG" id="COG0809">
    <property type="taxonomic scope" value="Bacteria"/>
</dbReference>
<dbReference type="HOGENOM" id="CLU_039110_1_1_5"/>
<dbReference type="OrthoDB" id="9805933at2"/>
<dbReference type="UniPathway" id="UPA00392"/>
<dbReference type="GO" id="GO:0005737">
    <property type="term" value="C:cytoplasm"/>
    <property type="evidence" value="ECO:0007669"/>
    <property type="project" value="UniProtKB-SubCell"/>
</dbReference>
<dbReference type="GO" id="GO:0051075">
    <property type="term" value="F:S-adenosylmethionine:tRNA ribosyltransferase-isomerase activity"/>
    <property type="evidence" value="ECO:0007669"/>
    <property type="project" value="UniProtKB-EC"/>
</dbReference>
<dbReference type="GO" id="GO:0008616">
    <property type="term" value="P:queuosine biosynthetic process"/>
    <property type="evidence" value="ECO:0007669"/>
    <property type="project" value="UniProtKB-UniRule"/>
</dbReference>
<dbReference type="GO" id="GO:0002099">
    <property type="term" value="P:tRNA wobble guanine modification"/>
    <property type="evidence" value="ECO:0007669"/>
    <property type="project" value="TreeGrafter"/>
</dbReference>
<dbReference type="FunFam" id="3.40.1780.10:FF:000001">
    <property type="entry name" value="S-adenosylmethionine:tRNA ribosyltransferase-isomerase"/>
    <property type="match status" value="1"/>
</dbReference>
<dbReference type="Gene3D" id="2.40.10.240">
    <property type="entry name" value="QueA-like"/>
    <property type="match status" value="1"/>
</dbReference>
<dbReference type="Gene3D" id="3.40.1780.10">
    <property type="entry name" value="QueA-like"/>
    <property type="match status" value="1"/>
</dbReference>
<dbReference type="HAMAP" id="MF_00113">
    <property type="entry name" value="QueA"/>
    <property type="match status" value="1"/>
</dbReference>
<dbReference type="InterPro" id="IPR003699">
    <property type="entry name" value="QueA"/>
</dbReference>
<dbReference type="InterPro" id="IPR042118">
    <property type="entry name" value="QueA_dom1"/>
</dbReference>
<dbReference type="InterPro" id="IPR042119">
    <property type="entry name" value="QueA_dom2"/>
</dbReference>
<dbReference type="InterPro" id="IPR036100">
    <property type="entry name" value="QueA_sf"/>
</dbReference>
<dbReference type="NCBIfam" id="NF001140">
    <property type="entry name" value="PRK00147.1"/>
    <property type="match status" value="1"/>
</dbReference>
<dbReference type="NCBIfam" id="TIGR00113">
    <property type="entry name" value="queA"/>
    <property type="match status" value="1"/>
</dbReference>
<dbReference type="PANTHER" id="PTHR30307">
    <property type="entry name" value="S-ADENOSYLMETHIONINE:TRNA RIBOSYLTRANSFERASE-ISOMERASE"/>
    <property type="match status" value="1"/>
</dbReference>
<dbReference type="PANTHER" id="PTHR30307:SF0">
    <property type="entry name" value="S-ADENOSYLMETHIONINE:TRNA RIBOSYLTRANSFERASE-ISOMERASE"/>
    <property type="match status" value="1"/>
</dbReference>
<dbReference type="Pfam" id="PF02547">
    <property type="entry name" value="Queuosine_synth"/>
    <property type="match status" value="1"/>
</dbReference>
<dbReference type="SUPFAM" id="SSF111337">
    <property type="entry name" value="QueA-like"/>
    <property type="match status" value="1"/>
</dbReference>
<comment type="function">
    <text evidence="1">Transfers and isomerizes the ribose moiety from AdoMet to the 7-aminomethyl group of 7-deazaguanine (preQ1-tRNA) to give epoxyqueuosine (oQ-tRNA).</text>
</comment>
<comment type="catalytic activity">
    <reaction evidence="1">
        <text>7-aminomethyl-7-carbaguanosine(34) in tRNA + S-adenosyl-L-methionine = epoxyqueuosine(34) in tRNA + adenine + L-methionine + 2 H(+)</text>
        <dbReference type="Rhea" id="RHEA:32155"/>
        <dbReference type="Rhea" id="RHEA-COMP:10342"/>
        <dbReference type="Rhea" id="RHEA-COMP:18582"/>
        <dbReference type="ChEBI" id="CHEBI:15378"/>
        <dbReference type="ChEBI" id="CHEBI:16708"/>
        <dbReference type="ChEBI" id="CHEBI:57844"/>
        <dbReference type="ChEBI" id="CHEBI:59789"/>
        <dbReference type="ChEBI" id="CHEBI:82833"/>
        <dbReference type="ChEBI" id="CHEBI:194443"/>
        <dbReference type="EC" id="2.4.99.17"/>
    </reaction>
</comment>
<comment type="pathway">
    <text evidence="1">tRNA modification; tRNA-queuosine biosynthesis.</text>
</comment>
<comment type="subunit">
    <text evidence="1">Monomer.</text>
</comment>
<comment type="subcellular location">
    <subcellularLocation>
        <location evidence="1">Cytoplasm</location>
    </subcellularLocation>
</comment>
<comment type="similarity">
    <text evidence="1">Belongs to the QueA family.</text>
</comment>
<name>QUEA_CAUSK</name>
<reference key="1">
    <citation type="submission" date="2008-01" db="EMBL/GenBank/DDBJ databases">
        <title>Complete sequence of chromosome of Caulobacter sp. K31.</title>
        <authorList>
            <consortium name="US DOE Joint Genome Institute"/>
            <person name="Copeland A."/>
            <person name="Lucas S."/>
            <person name="Lapidus A."/>
            <person name="Barry K."/>
            <person name="Glavina del Rio T."/>
            <person name="Dalin E."/>
            <person name="Tice H."/>
            <person name="Pitluck S."/>
            <person name="Bruce D."/>
            <person name="Goodwin L."/>
            <person name="Thompson L.S."/>
            <person name="Brettin T."/>
            <person name="Detter J.C."/>
            <person name="Han C."/>
            <person name="Schmutz J."/>
            <person name="Larimer F."/>
            <person name="Land M."/>
            <person name="Hauser L."/>
            <person name="Kyrpides N."/>
            <person name="Kim E."/>
            <person name="Stephens C."/>
            <person name="Richardson P."/>
        </authorList>
    </citation>
    <scope>NUCLEOTIDE SEQUENCE [LARGE SCALE GENOMIC DNA]</scope>
    <source>
        <strain>K31</strain>
    </source>
</reference>